<comment type="function">
    <text evidence="1">Binds specifically to voltage-gated sodium channels (Nav) (site 3), thereby delaying their inactivation during signal transduction. Has a strong effect on crustaceans and insects and a weaker effect on mammals. It strongly inhibits D.melanogaster sodium channel (DmNav1). It weakly inhibits the brain sodium channel Nav1.2/SCN2A. It strongly affects the heart sodium channels (Nav1.5/SCN5A).</text>
</comment>
<comment type="subcellular location">
    <subcellularLocation>
        <location evidence="5">Secreted</location>
    </subcellularLocation>
    <subcellularLocation>
        <location evidence="5">Nematocyst</location>
    </subcellularLocation>
</comment>
<comment type="miscellaneous">
    <text evidence="2">This protein is encoded by at least 3 different genes. At least 3 other genes code for a similar Av2 with an Ile (instead a Val) at position 34.</text>
</comment>
<comment type="similarity">
    <text evidence="5">Belongs to the sea anemone sodium channel inhibitory toxin family. Type I subfamily.</text>
</comment>
<comment type="caution">
    <text evidence="5">Opinions are divided on whether Anemonia viridis (Forsskal, 1775) and Anemonia sulcata (Pennant, 1777) are separate species.</text>
</comment>
<organism>
    <name type="scientific">Anemonia viridis</name>
    <name type="common">Snakelocks anemone</name>
    <dbReference type="NCBI Taxonomy" id="51769"/>
    <lineage>
        <taxon>Eukaryota</taxon>
        <taxon>Metazoa</taxon>
        <taxon>Cnidaria</taxon>
        <taxon>Anthozoa</taxon>
        <taxon>Hexacorallia</taxon>
        <taxon>Actiniaria</taxon>
        <taxon>Actiniidae</taxon>
        <taxon>Anemonia</taxon>
    </lineage>
</organism>
<protein>
    <recommendedName>
        <fullName evidence="4">Delta-actitoxin-Avd1c 4</fullName>
        <shortName evidence="4">Delta-AITX-Avd1c 4</shortName>
    </recommendedName>
    <alternativeName>
        <fullName evidence="6">Toxin 2c2</fullName>
    </alternativeName>
    <alternativeName>
        <fullName evidence="7">Toxin 2c3</fullName>
    </alternativeName>
</protein>
<accession>B1NWT7</accession>
<dbReference type="EMBL" id="EU124474">
    <property type="protein sequence ID" value="ABW97353.1"/>
    <property type="molecule type" value="mRNA"/>
</dbReference>
<dbReference type="EMBL" id="EU124475">
    <property type="protein sequence ID" value="ABW97354.1"/>
    <property type="molecule type" value="mRNA"/>
</dbReference>
<dbReference type="SMR" id="B1NWT7"/>
<dbReference type="GO" id="GO:0005576">
    <property type="term" value="C:extracellular region"/>
    <property type="evidence" value="ECO:0007669"/>
    <property type="project" value="UniProtKB-SubCell"/>
</dbReference>
<dbReference type="GO" id="GO:0042151">
    <property type="term" value="C:nematocyst"/>
    <property type="evidence" value="ECO:0007669"/>
    <property type="project" value="UniProtKB-SubCell"/>
</dbReference>
<dbReference type="GO" id="GO:0017080">
    <property type="term" value="F:sodium channel regulator activity"/>
    <property type="evidence" value="ECO:0007669"/>
    <property type="project" value="UniProtKB-KW"/>
</dbReference>
<dbReference type="GO" id="GO:0090729">
    <property type="term" value="F:toxin activity"/>
    <property type="evidence" value="ECO:0007669"/>
    <property type="project" value="UniProtKB-KW"/>
</dbReference>
<dbReference type="Gene3D" id="2.20.20.10">
    <property type="entry name" value="Anthopleurin-A"/>
    <property type="match status" value="1"/>
</dbReference>
<dbReference type="InterPro" id="IPR023355">
    <property type="entry name" value="Myo_ane_neurotoxin_sf"/>
</dbReference>
<dbReference type="Pfam" id="PF00706">
    <property type="entry name" value="Toxin_4"/>
    <property type="match status" value="1"/>
</dbReference>
<dbReference type="SUPFAM" id="SSF57392">
    <property type="entry name" value="Defensin-like"/>
    <property type="match status" value="1"/>
</dbReference>
<sequence length="79" mass="8534">MMNRLLVFLMLGAAFMLVVSAIDQDANDINKRGVPCLCDSDGPSVRGNTLSGIIWLAGCPSGWHNCKKHGPTIGWCCKQ</sequence>
<reference key="1">
    <citation type="journal article" date="2008" name="Mol. Biol. Evol.">
        <title>Concerted evolution of sea anemone neurotoxin genes is revealed through analysis of the Nematostella vectensis genome.</title>
        <authorList>
            <person name="Moran Y."/>
            <person name="Weinberger H."/>
            <person name="Sullivan J.C."/>
            <person name="Reitzel A.M."/>
            <person name="Finnerty J.R."/>
            <person name="Gurevitz M."/>
        </authorList>
    </citation>
    <scope>NUCLEOTIDE SEQUENCE [MRNA]</scope>
</reference>
<reference key="2">
    <citation type="journal article" date="2012" name="Toxicon">
        <title>Development of a rational nomenclature for naming peptide and protein toxins from sea anemones.</title>
        <authorList>
            <person name="Oliveira J.S."/>
            <person name="Fuentes-Silva D."/>
            <person name="King G.F."/>
        </authorList>
    </citation>
    <scope>NOMENCLATURE</scope>
</reference>
<evidence type="ECO:0000250" key="1">
    <source>
        <dbReference type="UniProtKB" id="P01528"/>
    </source>
</evidence>
<evidence type="ECO:0000250" key="2">
    <source>
        <dbReference type="UniProtKB" id="P0DL49"/>
    </source>
</evidence>
<evidence type="ECO:0000255" key="3"/>
<evidence type="ECO:0000303" key="4">
    <source>
    </source>
</evidence>
<evidence type="ECO:0000305" key="5"/>
<evidence type="ECO:0000312" key="6">
    <source>
        <dbReference type="EMBL" id="ABW97353.1"/>
    </source>
</evidence>
<evidence type="ECO:0000312" key="7">
    <source>
        <dbReference type="EMBL" id="ABW97354.1"/>
    </source>
</evidence>
<proteinExistence type="inferred from homology"/>
<feature type="signal peptide" evidence="3">
    <location>
        <begin position="1"/>
        <end position="21"/>
    </location>
</feature>
<feature type="propeptide" id="PRO_0000433685" evidence="1">
    <location>
        <begin position="22"/>
        <end position="30"/>
    </location>
</feature>
<feature type="chain" id="PRO_5000319682" description="Delta-actitoxin-Avd1c 4" evidence="2">
    <location>
        <begin position="33"/>
        <end position="79"/>
    </location>
</feature>
<feature type="disulfide bond" evidence="1">
    <location>
        <begin position="36"/>
        <end position="76"/>
    </location>
</feature>
<feature type="disulfide bond" evidence="1">
    <location>
        <begin position="38"/>
        <end position="66"/>
    </location>
</feature>
<feature type="disulfide bond" evidence="1">
    <location>
        <begin position="59"/>
        <end position="77"/>
    </location>
</feature>
<keyword id="KW-0165">Cleavage on pair of basic residues</keyword>
<keyword id="KW-1015">Disulfide bond</keyword>
<keyword id="KW-0872">Ion channel impairing toxin</keyword>
<keyword id="KW-0166">Nematocyst</keyword>
<keyword id="KW-0528">Neurotoxin</keyword>
<keyword id="KW-0964">Secreted</keyword>
<keyword id="KW-0732">Signal</keyword>
<keyword id="KW-0800">Toxin</keyword>
<keyword id="KW-0738">Voltage-gated sodium channel impairing toxin</keyword>
<name>NA12D_ANEVI</name>